<dbReference type="EMBL" id="AK057461">
    <property type="protein sequence ID" value="BAB71498.1"/>
    <property type="molecule type" value="mRNA"/>
</dbReference>
<dbReference type="EMBL" id="AK092484">
    <property type="protein sequence ID" value="BAC03902.1"/>
    <property type="molecule type" value="mRNA"/>
</dbReference>
<dbReference type="EMBL" id="AK295210">
    <property type="protein sequence ID" value="BAH12013.1"/>
    <property type="molecule type" value="mRNA"/>
</dbReference>
<dbReference type="EMBL" id="AK298593">
    <property type="protein sequence ID" value="BAH12819.1"/>
    <property type="molecule type" value="mRNA"/>
</dbReference>
<dbReference type="EMBL" id="AK301366">
    <property type="protein sequence ID" value="BAH13466.1"/>
    <property type="molecule type" value="mRNA"/>
</dbReference>
<dbReference type="EMBL" id="AK316056">
    <property type="protein sequence ID" value="BAH14427.1"/>
    <property type="molecule type" value="mRNA"/>
</dbReference>
<dbReference type="EMBL" id="CR456355">
    <property type="protein sequence ID" value="CAG30241.1"/>
    <property type="molecule type" value="mRNA"/>
</dbReference>
<dbReference type="EMBL" id="AC005663">
    <property type="status" value="NOT_ANNOTATED_CDS"/>
    <property type="molecule type" value="Genomic_DNA"/>
</dbReference>
<dbReference type="EMBL" id="AC006547">
    <property type="status" value="NOT_ANNOTATED_CDS"/>
    <property type="molecule type" value="Genomic_DNA"/>
</dbReference>
<dbReference type="EMBL" id="CH471176">
    <property type="protein sequence ID" value="EAX03001.1"/>
    <property type="molecule type" value="Genomic_DNA"/>
</dbReference>
<dbReference type="EMBL" id="CH471176">
    <property type="protein sequence ID" value="EAX03003.1"/>
    <property type="molecule type" value="Genomic_DNA"/>
</dbReference>
<dbReference type="EMBL" id="CH471176">
    <property type="protein sequence ID" value="EAX03005.1"/>
    <property type="molecule type" value="Genomic_DNA"/>
</dbReference>
<dbReference type="EMBL" id="BC041339">
    <property type="protein sequence ID" value="AAH41339.1"/>
    <property type="molecule type" value="mRNA"/>
</dbReference>
<dbReference type="EMBL" id="AL713640">
    <property type="protein sequence ID" value="CAD28454.1"/>
    <property type="molecule type" value="mRNA"/>
</dbReference>
<dbReference type="CCDS" id="CCDS13772.1">
    <molecule id="Q6ICL3-1"/>
</dbReference>
<dbReference type="CCDS" id="CCDS63404.1">
    <molecule id="Q6ICL3-2"/>
</dbReference>
<dbReference type="CCDS" id="CCDS63405.1">
    <molecule id="Q6ICL3-4"/>
</dbReference>
<dbReference type="CCDS" id="CCDS63406.1">
    <molecule id="Q6ICL3-6"/>
</dbReference>
<dbReference type="CCDS" id="CCDS63407.1">
    <molecule id="Q6ICL3-5"/>
</dbReference>
<dbReference type="RefSeq" id="NP_001270035.1">
    <molecule id="Q6ICL3-1"/>
    <property type="nucleotide sequence ID" value="NM_001283106.3"/>
</dbReference>
<dbReference type="RefSeq" id="NP_001270045.1">
    <molecule id="Q6ICL3-1"/>
    <property type="nucleotide sequence ID" value="NM_001283116.3"/>
</dbReference>
<dbReference type="RefSeq" id="NP_001270058.1">
    <molecule id="Q6ICL3-4"/>
    <property type="nucleotide sequence ID" value="NM_001283129.3"/>
</dbReference>
<dbReference type="RefSeq" id="NP_001270077.1">
    <property type="nucleotide sequence ID" value="NM_001283148.2"/>
</dbReference>
<dbReference type="RefSeq" id="NP_001270083.1">
    <property type="nucleotide sequence ID" value="NM_001283154.2"/>
</dbReference>
<dbReference type="RefSeq" id="NP_001270108.1">
    <molecule id="Q6ICL3-2"/>
    <property type="nucleotide sequence ID" value="NM_001283179.3"/>
</dbReference>
<dbReference type="RefSeq" id="NP_001270115.1">
    <molecule id="Q6ICL3-2"/>
    <property type="nucleotide sequence ID" value="NM_001283186.3"/>
</dbReference>
<dbReference type="RefSeq" id="NP_001270128.1">
    <property type="nucleotide sequence ID" value="NM_001283199.2"/>
</dbReference>
<dbReference type="RefSeq" id="NP_001270144.1">
    <molecule id="Q6ICL3-6"/>
    <property type="nucleotide sequence ID" value="NM_001283215.3"/>
</dbReference>
<dbReference type="RefSeq" id="NP_001270164.1">
    <molecule id="Q6ICL3-5"/>
    <property type="nucleotide sequence ID" value="NM_001283235.3"/>
</dbReference>
<dbReference type="RefSeq" id="NP_001270177.1">
    <property type="nucleotide sequence ID" value="NM_001283248.2"/>
</dbReference>
<dbReference type="RefSeq" id="NP_001309072.1">
    <molecule id="Q6ICL3-4"/>
    <property type="nucleotide sequence ID" value="NM_001322143.2"/>
</dbReference>
<dbReference type="RefSeq" id="NP_001309077.1">
    <property type="nucleotide sequence ID" value="NM_001322148.1"/>
</dbReference>
<dbReference type="RefSeq" id="NP_001309092.1">
    <molecule id="Q6ICL3-2"/>
    <property type="nucleotide sequence ID" value="NM_001322163.2"/>
</dbReference>
<dbReference type="RefSeq" id="NP_001309095.1">
    <molecule id="Q6ICL3-2"/>
    <property type="nucleotide sequence ID" value="NM_001322166.2"/>
</dbReference>
<dbReference type="RefSeq" id="NP_001309096.1">
    <molecule id="Q6ICL3-2"/>
    <property type="nucleotide sequence ID" value="NM_001322167.2"/>
</dbReference>
<dbReference type="RefSeq" id="NP_001309100.1">
    <molecule id="Q6ICL3-5"/>
    <property type="nucleotide sequence ID" value="NM_001322171.2"/>
</dbReference>
<dbReference type="RefSeq" id="NP_001309101.1">
    <molecule id="Q6ICL3-5"/>
    <property type="nucleotide sequence ID" value="NM_001322172.2"/>
</dbReference>
<dbReference type="RefSeq" id="NP_001309102.1">
    <molecule id="Q6ICL3-5"/>
    <property type="nucleotide sequence ID" value="NM_001322173.2"/>
</dbReference>
<dbReference type="RefSeq" id="NP_001309103.1">
    <molecule id="Q6ICL3-5"/>
    <property type="nucleotide sequence ID" value="NM_001322174.2"/>
</dbReference>
<dbReference type="RefSeq" id="NP_001309104.1">
    <molecule id="Q6ICL3-5"/>
    <property type="nucleotide sequence ID" value="NM_001322175.2"/>
</dbReference>
<dbReference type="RefSeq" id="NP_690870.3">
    <molecule id="Q6ICL3-1"/>
    <property type="nucleotide sequence ID" value="NM_152906.6"/>
</dbReference>
<dbReference type="RefSeq" id="XP_011528169.1">
    <property type="nucleotide sequence ID" value="XM_011529867.1"/>
</dbReference>
<dbReference type="RefSeq" id="XP_047297080.1">
    <molecule id="Q6ICL3-1"/>
    <property type="nucleotide sequence ID" value="XM_047441124.1"/>
</dbReference>
<dbReference type="RefSeq" id="XP_054181047.1">
    <molecule id="Q6ICL3-1"/>
    <property type="nucleotide sequence ID" value="XM_054325072.1"/>
</dbReference>
<dbReference type="PDB" id="8SV7">
    <property type="method" value="X-ray"/>
    <property type="resolution" value="1.53 A"/>
    <property type="chains" value="A/B=1-276"/>
</dbReference>
<dbReference type="PDBsum" id="8SV7"/>
<dbReference type="SMR" id="Q6ICL3"/>
<dbReference type="BioGRID" id="126178">
    <property type="interactions" value="28"/>
</dbReference>
<dbReference type="FunCoup" id="Q6ICL3">
    <property type="interactions" value="1660"/>
</dbReference>
<dbReference type="IntAct" id="Q6ICL3">
    <property type="interactions" value="2"/>
</dbReference>
<dbReference type="STRING" id="9606.ENSP00000403645"/>
<dbReference type="GlyGen" id="Q6ICL3">
    <property type="glycosylation" value="1 site, 1 O-linked glycan (1 site)"/>
</dbReference>
<dbReference type="iPTMnet" id="Q6ICL3"/>
<dbReference type="PhosphoSitePlus" id="Q6ICL3"/>
<dbReference type="SwissPalm" id="Q6ICL3"/>
<dbReference type="BioMuta" id="TANGO2"/>
<dbReference type="DMDM" id="74709518"/>
<dbReference type="jPOST" id="Q6ICL3"/>
<dbReference type="MassIVE" id="Q6ICL3"/>
<dbReference type="PaxDb" id="9606-ENSP00000403645"/>
<dbReference type="PeptideAtlas" id="Q6ICL3"/>
<dbReference type="ProteomicsDB" id="6277"/>
<dbReference type="ProteomicsDB" id="66397">
    <molecule id="Q6ICL3-1"/>
</dbReference>
<dbReference type="ProteomicsDB" id="66398">
    <molecule id="Q6ICL3-2"/>
</dbReference>
<dbReference type="ProteomicsDB" id="66399">
    <molecule id="Q6ICL3-3"/>
</dbReference>
<dbReference type="ProteomicsDB" id="6827"/>
<dbReference type="Pumba" id="Q6ICL3"/>
<dbReference type="Antibodypedia" id="313">
    <property type="antibodies" value="96 antibodies from 16 providers"/>
</dbReference>
<dbReference type="DNASU" id="128989"/>
<dbReference type="Ensembl" id="ENST00000327374.9">
    <molecule id="Q6ICL3-1"/>
    <property type="protein sequence ID" value="ENSP00000332721.4"/>
    <property type="gene ID" value="ENSG00000183597.16"/>
</dbReference>
<dbReference type="Ensembl" id="ENST00000398042.6">
    <molecule id="Q6ICL3-2"/>
    <property type="protein sequence ID" value="ENSP00000381122.2"/>
    <property type="gene ID" value="ENSG00000183597.16"/>
</dbReference>
<dbReference type="Ensembl" id="ENST00000401833.5">
    <molecule id="Q6ICL3-4"/>
    <property type="protein sequence ID" value="ENSP00000384827.1"/>
    <property type="gene ID" value="ENSG00000183597.16"/>
</dbReference>
<dbReference type="Ensembl" id="ENST00000401886.5">
    <molecule id="Q6ICL3-2"/>
    <property type="protein sequence ID" value="ENSP00000385662.1"/>
    <property type="gene ID" value="ENSG00000183597.16"/>
</dbReference>
<dbReference type="Ensembl" id="ENST00000432883.5">
    <molecule id="Q6ICL3-5"/>
    <property type="protein sequence ID" value="ENSP00000402926.2"/>
    <property type="gene ID" value="ENSG00000183597.16"/>
</dbReference>
<dbReference type="Ensembl" id="ENST00000434570.6">
    <molecule id="Q6ICL3-6"/>
    <property type="protein sequence ID" value="ENSP00000391262.2"/>
    <property type="gene ID" value="ENSG00000183597.16"/>
</dbReference>
<dbReference type="Ensembl" id="ENST00000456048.5">
    <molecule id="Q6ICL3-4"/>
    <property type="protein sequence ID" value="ENSP00000403645.2"/>
    <property type="gene ID" value="ENSG00000183597.16"/>
</dbReference>
<dbReference type="GeneID" id="128989"/>
<dbReference type="KEGG" id="hsa:128989"/>
<dbReference type="MANE-Select" id="ENST00000327374.9">
    <property type="protein sequence ID" value="ENSP00000332721.4"/>
    <property type="RefSeq nucleotide sequence ID" value="NM_152906.7"/>
    <property type="RefSeq protein sequence ID" value="NP_690870.3"/>
</dbReference>
<dbReference type="UCSC" id="uc002zrc.3">
    <molecule id="Q6ICL3-1"/>
    <property type="organism name" value="human"/>
</dbReference>
<dbReference type="AGR" id="HGNC:25439"/>
<dbReference type="CTD" id="128989"/>
<dbReference type="DisGeNET" id="128989"/>
<dbReference type="GeneCards" id="TANGO2"/>
<dbReference type="GeneReviews" id="TANGO2"/>
<dbReference type="HGNC" id="HGNC:25439">
    <property type="gene designation" value="TANGO2"/>
</dbReference>
<dbReference type="HPA" id="ENSG00000183597">
    <property type="expression patterns" value="Tissue enhanced (heart)"/>
</dbReference>
<dbReference type="MalaCards" id="TANGO2"/>
<dbReference type="MIM" id="616830">
    <property type="type" value="gene"/>
</dbReference>
<dbReference type="MIM" id="616878">
    <property type="type" value="phenotype"/>
</dbReference>
<dbReference type="neXtProt" id="NX_Q6ICL3"/>
<dbReference type="OpenTargets" id="ENSG00000183597"/>
<dbReference type="Orphanet" id="480864">
    <property type="disease" value="Recurrent metabolic encephalomyopathic crises-rhabdomyolysis-cardiac arrhythmia-intellectual disability syndrome"/>
</dbReference>
<dbReference type="PharmGKB" id="PA143485406"/>
<dbReference type="VEuPathDB" id="HostDB:ENSG00000183597"/>
<dbReference type="eggNOG" id="KOG2342">
    <property type="taxonomic scope" value="Eukaryota"/>
</dbReference>
<dbReference type="GeneTree" id="ENSGT00390000012733"/>
<dbReference type="HOGENOM" id="CLU_047037_3_1_1"/>
<dbReference type="InParanoid" id="Q6ICL3"/>
<dbReference type="OMA" id="FAWRPGH"/>
<dbReference type="OrthoDB" id="191601at2759"/>
<dbReference type="PAN-GO" id="Q6ICL3">
    <property type="GO annotations" value="3 GO annotations based on evolutionary models"/>
</dbReference>
<dbReference type="PhylomeDB" id="Q6ICL3"/>
<dbReference type="TreeFam" id="TF315064"/>
<dbReference type="PathwayCommons" id="Q6ICL3"/>
<dbReference type="SignaLink" id="Q6ICL3"/>
<dbReference type="BioGRID-ORCS" id="128989">
    <property type="hits" value="17 hits in 1153 CRISPR screens"/>
</dbReference>
<dbReference type="ChiTaRS" id="TANGO2">
    <property type="organism name" value="human"/>
</dbReference>
<dbReference type="GeneWiki" id="C22orf25"/>
<dbReference type="GenomeRNAi" id="128989"/>
<dbReference type="Pharos" id="Q6ICL3">
    <property type="development level" value="Tbio"/>
</dbReference>
<dbReference type="PRO" id="PR:Q6ICL3"/>
<dbReference type="Proteomes" id="UP000005640">
    <property type="component" value="Chromosome 22"/>
</dbReference>
<dbReference type="RNAct" id="Q6ICL3">
    <property type="molecule type" value="protein"/>
</dbReference>
<dbReference type="Bgee" id="ENSG00000183597">
    <property type="expression patterns" value="Expressed in apex of heart and 149 other cell types or tissues"/>
</dbReference>
<dbReference type="ExpressionAtlas" id="Q6ICL3">
    <property type="expression patterns" value="baseline and differential"/>
</dbReference>
<dbReference type="GO" id="GO:0005737">
    <property type="term" value="C:cytoplasm"/>
    <property type="evidence" value="ECO:0000314"/>
    <property type="project" value="UniProtKB"/>
</dbReference>
<dbReference type="GO" id="GO:0005829">
    <property type="term" value="C:cytosol"/>
    <property type="evidence" value="ECO:0000314"/>
    <property type="project" value="UniProtKB"/>
</dbReference>
<dbReference type="GO" id="GO:0005794">
    <property type="term" value="C:Golgi apparatus"/>
    <property type="evidence" value="ECO:0000314"/>
    <property type="project" value="UniProtKB"/>
</dbReference>
<dbReference type="GO" id="GO:0005739">
    <property type="term" value="C:mitochondrion"/>
    <property type="evidence" value="ECO:0000314"/>
    <property type="project" value="UniProtKB"/>
</dbReference>
<dbReference type="GO" id="GO:0007030">
    <property type="term" value="P:Golgi organization"/>
    <property type="evidence" value="ECO:0000318"/>
    <property type="project" value="GO_Central"/>
</dbReference>
<dbReference type="GO" id="GO:0009306">
    <property type="term" value="P:protein secretion"/>
    <property type="evidence" value="ECO:0000318"/>
    <property type="project" value="GO_Central"/>
</dbReference>
<dbReference type="InterPro" id="IPR008551">
    <property type="entry name" value="TANGO2"/>
</dbReference>
<dbReference type="PANTHER" id="PTHR17985">
    <property type="entry name" value="SER/THR-RICH PROTEIN T10 IN DGCR REGION"/>
    <property type="match status" value="1"/>
</dbReference>
<dbReference type="PANTHER" id="PTHR17985:SF8">
    <property type="entry name" value="TRANSPORT AND GOLGI ORGANIZATION PROTEIN 2 HOMOLOG"/>
    <property type="match status" value="1"/>
</dbReference>
<dbReference type="Pfam" id="PF05742">
    <property type="entry name" value="TANGO2"/>
    <property type="match status" value="1"/>
</dbReference>
<reference key="1">
    <citation type="journal article" date="2004" name="Nat. Genet.">
        <title>Complete sequencing and characterization of 21,243 full-length human cDNAs.</title>
        <authorList>
            <person name="Ota T."/>
            <person name="Suzuki Y."/>
            <person name="Nishikawa T."/>
            <person name="Otsuki T."/>
            <person name="Sugiyama T."/>
            <person name="Irie R."/>
            <person name="Wakamatsu A."/>
            <person name="Hayashi K."/>
            <person name="Sato H."/>
            <person name="Nagai K."/>
            <person name="Kimura K."/>
            <person name="Makita H."/>
            <person name="Sekine M."/>
            <person name="Obayashi M."/>
            <person name="Nishi T."/>
            <person name="Shibahara T."/>
            <person name="Tanaka T."/>
            <person name="Ishii S."/>
            <person name="Yamamoto J."/>
            <person name="Saito K."/>
            <person name="Kawai Y."/>
            <person name="Isono Y."/>
            <person name="Nakamura Y."/>
            <person name="Nagahari K."/>
            <person name="Murakami K."/>
            <person name="Yasuda T."/>
            <person name="Iwayanagi T."/>
            <person name="Wagatsuma M."/>
            <person name="Shiratori A."/>
            <person name="Sudo H."/>
            <person name="Hosoiri T."/>
            <person name="Kaku Y."/>
            <person name="Kodaira H."/>
            <person name="Kondo H."/>
            <person name="Sugawara M."/>
            <person name="Takahashi M."/>
            <person name="Kanda K."/>
            <person name="Yokoi T."/>
            <person name="Furuya T."/>
            <person name="Kikkawa E."/>
            <person name="Omura Y."/>
            <person name="Abe K."/>
            <person name="Kamihara K."/>
            <person name="Katsuta N."/>
            <person name="Sato K."/>
            <person name="Tanikawa M."/>
            <person name="Yamazaki M."/>
            <person name="Ninomiya K."/>
            <person name="Ishibashi T."/>
            <person name="Yamashita H."/>
            <person name="Murakawa K."/>
            <person name="Fujimori K."/>
            <person name="Tanai H."/>
            <person name="Kimata M."/>
            <person name="Watanabe M."/>
            <person name="Hiraoka S."/>
            <person name="Chiba Y."/>
            <person name="Ishida S."/>
            <person name="Ono Y."/>
            <person name="Takiguchi S."/>
            <person name="Watanabe S."/>
            <person name="Yosida M."/>
            <person name="Hotuta T."/>
            <person name="Kusano J."/>
            <person name="Kanehori K."/>
            <person name="Takahashi-Fujii A."/>
            <person name="Hara H."/>
            <person name="Tanase T.-O."/>
            <person name="Nomura Y."/>
            <person name="Togiya S."/>
            <person name="Komai F."/>
            <person name="Hara R."/>
            <person name="Takeuchi K."/>
            <person name="Arita M."/>
            <person name="Imose N."/>
            <person name="Musashino K."/>
            <person name="Yuuki H."/>
            <person name="Oshima A."/>
            <person name="Sasaki N."/>
            <person name="Aotsuka S."/>
            <person name="Yoshikawa Y."/>
            <person name="Matsunawa H."/>
            <person name="Ichihara T."/>
            <person name="Shiohata N."/>
            <person name="Sano S."/>
            <person name="Moriya S."/>
            <person name="Momiyama H."/>
            <person name="Satoh N."/>
            <person name="Takami S."/>
            <person name="Terashima Y."/>
            <person name="Suzuki O."/>
            <person name="Nakagawa S."/>
            <person name="Senoh A."/>
            <person name="Mizoguchi H."/>
            <person name="Goto Y."/>
            <person name="Shimizu F."/>
            <person name="Wakebe H."/>
            <person name="Hishigaki H."/>
            <person name="Watanabe T."/>
            <person name="Sugiyama A."/>
            <person name="Takemoto M."/>
            <person name="Kawakami B."/>
            <person name="Yamazaki M."/>
            <person name="Watanabe K."/>
            <person name="Kumagai A."/>
            <person name="Itakura S."/>
            <person name="Fukuzumi Y."/>
            <person name="Fujimori Y."/>
            <person name="Komiyama M."/>
            <person name="Tashiro H."/>
            <person name="Tanigami A."/>
            <person name="Fujiwara T."/>
            <person name="Ono T."/>
            <person name="Yamada K."/>
            <person name="Fujii Y."/>
            <person name="Ozaki K."/>
            <person name="Hirao M."/>
            <person name="Ohmori Y."/>
            <person name="Kawabata A."/>
            <person name="Hikiji T."/>
            <person name="Kobatake N."/>
            <person name="Inagaki H."/>
            <person name="Ikema Y."/>
            <person name="Okamoto S."/>
            <person name="Okitani R."/>
            <person name="Kawakami T."/>
            <person name="Noguchi S."/>
            <person name="Itoh T."/>
            <person name="Shigeta K."/>
            <person name="Senba T."/>
            <person name="Matsumura K."/>
            <person name="Nakajima Y."/>
            <person name="Mizuno T."/>
            <person name="Morinaga M."/>
            <person name="Sasaki M."/>
            <person name="Togashi T."/>
            <person name="Oyama M."/>
            <person name="Hata H."/>
            <person name="Watanabe M."/>
            <person name="Komatsu T."/>
            <person name="Mizushima-Sugano J."/>
            <person name="Satoh T."/>
            <person name="Shirai Y."/>
            <person name="Takahashi Y."/>
            <person name="Nakagawa K."/>
            <person name="Okumura K."/>
            <person name="Nagase T."/>
            <person name="Nomura N."/>
            <person name="Kikuchi H."/>
            <person name="Masuho Y."/>
            <person name="Yamashita R."/>
            <person name="Nakai K."/>
            <person name="Yada T."/>
            <person name="Nakamura Y."/>
            <person name="Ohara O."/>
            <person name="Isogai T."/>
            <person name="Sugano S."/>
        </authorList>
    </citation>
    <scope>NUCLEOTIDE SEQUENCE [LARGE SCALE MRNA] (ISOFORMS 2; 3; 4; 5 AND 6)</scope>
    <source>
        <tissue>Caudate nucleus</tissue>
        <tissue>Hippocampus</tissue>
        <tissue>Mesangial cell</tissue>
        <tissue>Placenta</tissue>
        <tissue>Synovium</tissue>
        <tissue>Testis</tissue>
    </source>
</reference>
<reference key="2">
    <citation type="journal article" date="2004" name="Genome Biol.">
        <title>A genome annotation-driven approach to cloning the human ORFeome.</title>
        <authorList>
            <person name="Collins J.E."/>
            <person name="Wright C.L."/>
            <person name="Edwards C.A."/>
            <person name="Davis M.P."/>
            <person name="Grinham J.A."/>
            <person name="Cole C.G."/>
            <person name="Goward M.E."/>
            <person name="Aguado B."/>
            <person name="Mallya M."/>
            <person name="Mokrab Y."/>
            <person name="Huckle E.J."/>
            <person name="Beare D.M."/>
            <person name="Dunham I."/>
        </authorList>
    </citation>
    <scope>NUCLEOTIDE SEQUENCE [LARGE SCALE MRNA] (ISOFORM 1)</scope>
</reference>
<reference key="3">
    <citation type="journal article" date="1999" name="Nature">
        <title>The DNA sequence of human chromosome 22.</title>
        <authorList>
            <person name="Dunham I."/>
            <person name="Hunt A.R."/>
            <person name="Collins J.E."/>
            <person name="Bruskiewich R."/>
            <person name="Beare D.M."/>
            <person name="Clamp M."/>
            <person name="Smink L.J."/>
            <person name="Ainscough R."/>
            <person name="Almeida J.P."/>
            <person name="Babbage A.K."/>
            <person name="Bagguley C."/>
            <person name="Bailey J."/>
            <person name="Barlow K.F."/>
            <person name="Bates K.N."/>
            <person name="Beasley O.P."/>
            <person name="Bird C.P."/>
            <person name="Blakey S.E."/>
            <person name="Bridgeman A.M."/>
            <person name="Buck D."/>
            <person name="Burgess J."/>
            <person name="Burrill W.D."/>
            <person name="Burton J."/>
            <person name="Carder C."/>
            <person name="Carter N.P."/>
            <person name="Chen Y."/>
            <person name="Clark G."/>
            <person name="Clegg S.M."/>
            <person name="Cobley V.E."/>
            <person name="Cole C.G."/>
            <person name="Collier R.E."/>
            <person name="Connor R."/>
            <person name="Conroy D."/>
            <person name="Corby N.R."/>
            <person name="Coville G.J."/>
            <person name="Cox A.V."/>
            <person name="Davis J."/>
            <person name="Dawson E."/>
            <person name="Dhami P.D."/>
            <person name="Dockree C."/>
            <person name="Dodsworth S.J."/>
            <person name="Durbin R.M."/>
            <person name="Ellington A.G."/>
            <person name="Evans K.L."/>
            <person name="Fey J.M."/>
            <person name="Fleming K."/>
            <person name="French L."/>
            <person name="Garner A.A."/>
            <person name="Gilbert J.G.R."/>
            <person name="Goward M.E."/>
            <person name="Grafham D.V."/>
            <person name="Griffiths M.N.D."/>
            <person name="Hall C."/>
            <person name="Hall R.E."/>
            <person name="Hall-Tamlyn G."/>
            <person name="Heathcott R.W."/>
            <person name="Ho S."/>
            <person name="Holmes S."/>
            <person name="Hunt S.E."/>
            <person name="Jones M.C."/>
            <person name="Kershaw J."/>
            <person name="Kimberley A.M."/>
            <person name="King A."/>
            <person name="Laird G.K."/>
            <person name="Langford C.F."/>
            <person name="Leversha M.A."/>
            <person name="Lloyd C."/>
            <person name="Lloyd D.M."/>
            <person name="Martyn I.D."/>
            <person name="Mashreghi-Mohammadi M."/>
            <person name="Matthews L.H."/>
            <person name="Mccann O.T."/>
            <person name="Mcclay J."/>
            <person name="Mclaren S."/>
            <person name="McMurray A.A."/>
            <person name="Milne S.A."/>
            <person name="Mortimore B.J."/>
            <person name="Odell C.N."/>
            <person name="Pavitt R."/>
            <person name="Pearce A.V."/>
            <person name="Pearson D."/>
            <person name="Phillimore B.J.C.T."/>
            <person name="Phillips S.H."/>
            <person name="Plumb R.W."/>
            <person name="Ramsay H."/>
            <person name="Ramsey Y."/>
            <person name="Rogers L."/>
            <person name="Ross M.T."/>
            <person name="Scott C.E."/>
            <person name="Sehra H.K."/>
            <person name="Skuce C.D."/>
            <person name="Smalley S."/>
            <person name="Smith M.L."/>
            <person name="Soderlund C."/>
            <person name="Spragon L."/>
            <person name="Steward C.A."/>
            <person name="Sulston J.E."/>
            <person name="Swann R.M."/>
            <person name="Vaudin M."/>
            <person name="Wall M."/>
            <person name="Wallis J.M."/>
            <person name="Whiteley M.N."/>
            <person name="Willey D.L."/>
            <person name="Williams L."/>
            <person name="Williams S.A."/>
            <person name="Williamson H."/>
            <person name="Wilmer T.E."/>
            <person name="Wilming L."/>
            <person name="Wright C.L."/>
            <person name="Hubbard T."/>
            <person name="Bentley D.R."/>
            <person name="Beck S."/>
            <person name="Rogers J."/>
            <person name="Shimizu N."/>
            <person name="Minoshima S."/>
            <person name="Kawasaki K."/>
            <person name="Sasaki T."/>
            <person name="Asakawa S."/>
            <person name="Kudoh J."/>
            <person name="Shintani A."/>
            <person name="Shibuya K."/>
            <person name="Yoshizaki Y."/>
            <person name="Aoki N."/>
            <person name="Mitsuyama S."/>
            <person name="Roe B.A."/>
            <person name="Chen F."/>
            <person name="Chu L."/>
            <person name="Crabtree J."/>
            <person name="Deschamps S."/>
            <person name="Do A."/>
            <person name="Do T."/>
            <person name="Dorman A."/>
            <person name="Fang F."/>
            <person name="Fu Y."/>
            <person name="Hu P."/>
            <person name="Hua A."/>
            <person name="Kenton S."/>
            <person name="Lai H."/>
            <person name="Lao H.I."/>
            <person name="Lewis J."/>
            <person name="Lewis S."/>
            <person name="Lin S.-P."/>
            <person name="Loh P."/>
            <person name="Malaj E."/>
            <person name="Nguyen T."/>
            <person name="Pan H."/>
            <person name="Phan S."/>
            <person name="Qi S."/>
            <person name="Qian Y."/>
            <person name="Ray L."/>
            <person name="Ren Q."/>
            <person name="Shaull S."/>
            <person name="Sloan D."/>
            <person name="Song L."/>
            <person name="Wang Q."/>
            <person name="Wang Y."/>
            <person name="Wang Z."/>
            <person name="White J."/>
            <person name="Willingham D."/>
            <person name="Wu H."/>
            <person name="Yao Z."/>
            <person name="Zhan M."/>
            <person name="Zhang G."/>
            <person name="Chissoe S."/>
            <person name="Murray J."/>
            <person name="Miller N."/>
            <person name="Minx P."/>
            <person name="Fulton R."/>
            <person name="Johnson D."/>
            <person name="Bemis G."/>
            <person name="Bentley D."/>
            <person name="Bradshaw H."/>
            <person name="Bourne S."/>
            <person name="Cordes M."/>
            <person name="Du Z."/>
            <person name="Fulton L."/>
            <person name="Goela D."/>
            <person name="Graves T."/>
            <person name="Hawkins J."/>
            <person name="Hinds K."/>
            <person name="Kemp K."/>
            <person name="Latreille P."/>
            <person name="Layman D."/>
            <person name="Ozersky P."/>
            <person name="Rohlfing T."/>
            <person name="Scheet P."/>
            <person name="Walker C."/>
            <person name="Wamsley A."/>
            <person name="Wohldmann P."/>
            <person name="Pepin K."/>
            <person name="Nelson J."/>
            <person name="Korf I."/>
            <person name="Bedell J.A."/>
            <person name="Hillier L.W."/>
            <person name="Mardis E."/>
            <person name="Waterston R."/>
            <person name="Wilson R."/>
            <person name="Emanuel B.S."/>
            <person name="Shaikh T."/>
            <person name="Kurahashi H."/>
            <person name="Saitta S."/>
            <person name="Budarf M.L."/>
            <person name="McDermid H.E."/>
            <person name="Johnson A."/>
            <person name="Wong A.C.C."/>
            <person name="Morrow B.E."/>
            <person name="Edelmann L."/>
            <person name="Kim U.J."/>
            <person name="Shizuya H."/>
            <person name="Simon M.I."/>
            <person name="Dumanski J.P."/>
            <person name="Peyrard M."/>
            <person name="Kedra D."/>
            <person name="Seroussi E."/>
            <person name="Fransson I."/>
            <person name="Tapia I."/>
            <person name="Bruder C.E."/>
            <person name="O'Brien K.P."/>
            <person name="Wilkinson P."/>
            <person name="Bodenteich A."/>
            <person name="Hartman K."/>
            <person name="Hu X."/>
            <person name="Khan A.S."/>
            <person name="Lane L."/>
            <person name="Tilahun Y."/>
            <person name="Wright H."/>
        </authorList>
    </citation>
    <scope>NUCLEOTIDE SEQUENCE [LARGE SCALE GENOMIC DNA]</scope>
</reference>
<reference key="4">
    <citation type="submission" date="2005-09" db="EMBL/GenBank/DDBJ databases">
        <authorList>
            <person name="Mural R.J."/>
            <person name="Istrail S."/>
            <person name="Sutton G.G."/>
            <person name="Florea L."/>
            <person name="Halpern A.L."/>
            <person name="Mobarry C.M."/>
            <person name="Lippert R."/>
            <person name="Walenz B."/>
            <person name="Shatkay H."/>
            <person name="Dew I."/>
            <person name="Miller J.R."/>
            <person name="Flanigan M.J."/>
            <person name="Edwards N.J."/>
            <person name="Bolanos R."/>
            <person name="Fasulo D."/>
            <person name="Halldorsson B.V."/>
            <person name="Hannenhalli S."/>
            <person name="Turner R."/>
            <person name="Yooseph S."/>
            <person name="Lu F."/>
            <person name="Nusskern D.R."/>
            <person name="Shue B.C."/>
            <person name="Zheng X.H."/>
            <person name="Zhong F."/>
            <person name="Delcher A.L."/>
            <person name="Huson D.H."/>
            <person name="Kravitz S.A."/>
            <person name="Mouchard L."/>
            <person name="Reinert K."/>
            <person name="Remington K.A."/>
            <person name="Clark A.G."/>
            <person name="Waterman M.S."/>
            <person name="Eichler E.E."/>
            <person name="Adams M.D."/>
            <person name="Hunkapiller M.W."/>
            <person name="Myers E.W."/>
            <person name="Venter J.C."/>
        </authorList>
    </citation>
    <scope>NUCLEOTIDE SEQUENCE [LARGE SCALE GENOMIC DNA]</scope>
</reference>
<reference key="5">
    <citation type="journal article" date="2004" name="Genome Res.">
        <title>The status, quality, and expansion of the NIH full-length cDNA project: the Mammalian Gene Collection (MGC).</title>
        <authorList>
            <consortium name="The MGC Project Team"/>
        </authorList>
    </citation>
    <scope>NUCLEOTIDE SEQUENCE [LARGE SCALE MRNA] (ISOFORM 1)</scope>
    <scope>VARIANTS ASN-125 AND LYS-200</scope>
    <source>
        <tissue>Brain</tissue>
    </source>
</reference>
<reference key="6">
    <citation type="journal article" date="2007" name="BMC Genomics">
        <title>The full-ORF clone resource of the German cDNA consortium.</title>
        <authorList>
            <person name="Bechtel S."/>
            <person name="Rosenfelder H."/>
            <person name="Duda A."/>
            <person name="Schmidt C.P."/>
            <person name="Ernst U."/>
            <person name="Wellenreuther R."/>
            <person name="Mehrle A."/>
            <person name="Schuster C."/>
            <person name="Bahr A."/>
            <person name="Bloecker H."/>
            <person name="Heubner D."/>
            <person name="Hoerlein A."/>
            <person name="Michel G."/>
            <person name="Wedler H."/>
            <person name="Koehrer K."/>
            <person name="Ottenwaelder B."/>
            <person name="Poustka A."/>
            <person name="Wiemann S."/>
            <person name="Schupp I."/>
        </authorList>
    </citation>
    <scope>NUCLEOTIDE SEQUENCE [LARGE SCALE MRNA] OF 53-276 (ISOFORM 1)</scope>
    <source>
        <tissue>Amygdala</tissue>
    </source>
</reference>
<reference key="7">
    <citation type="journal article" date="2022" name="Sci. Rep.">
        <title>Mitochondrial dysfunction associated with TANGO2 deficiency.</title>
        <authorList>
            <person name="Heiman P."/>
            <person name="Mohsen A.W."/>
            <person name="Karunanidhi A."/>
            <person name="St Croix C."/>
            <person name="Watkins S."/>
            <person name="Koppes E."/>
            <person name="Haas R."/>
            <person name="Vockley J."/>
            <person name="Ghaloul-Gonzalez L."/>
        </authorList>
    </citation>
    <scope>SUBCELLULAR LOCATION</scope>
</reference>
<reference key="8">
    <citation type="journal article" date="2023" name="Elife">
        <title>Defects in lipid homeostasis reflect the function of TANGO2 in phospholipid and neutral lipid metabolism.</title>
        <authorList>
            <person name="Lujan A.L."/>
            <person name="Foresti O."/>
            <person name="Sugden C."/>
            <person name="Brouwers N."/>
            <person name="Farre A.M."/>
            <person name="Vignoli A."/>
            <person name="Azamian M."/>
            <person name="Turner A."/>
            <person name="Wojnacki J."/>
            <person name="Malhotra V."/>
        </authorList>
    </citation>
    <scope>SUBCELLULAR LOCATION</scope>
    <scope>FUNCTION</scope>
</reference>
<reference key="9">
    <citation type="journal article" date="2016" name="Am. J. Hum. Genet.">
        <title>Recurrent muscle weakness with rhabdomyolysis, metabolic crises, and cardiac arrhythmia due to bi-allelic TANGO2 mutations.</title>
        <authorList>
            <person name="Lalani S.R."/>
            <person name="Liu P."/>
            <person name="Rosenfeld J.A."/>
            <person name="Watkin L.B."/>
            <person name="Chiang T."/>
            <person name="Leduc M.S."/>
            <person name="Zhu W."/>
            <person name="Ding Y."/>
            <person name="Pan S."/>
            <person name="Vetrini F."/>
            <person name="Miyake C.Y."/>
            <person name="Shinawi M."/>
            <person name="Gambin T."/>
            <person name="Eldomery M.K."/>
            <person name="Akdemir Z.H."/>
            <person name="Emrick L."/>
            <person name="Wilnai Y."/>
            <person name="Schelley S."/>
            <person name="Koenig M.K."/>
            <person name="Memon N."/>
            <person name="Farach L.S."/>
            <person name="Coe B.P."/>
            <person name="Azamian M."/>
            <person name="Hernandez P."/>
            <person name="Zapata G."/>
            <person name="Jhangiani S.N."/>
            <person name="Muzny D.M."/>
            <person name="Lotze T."/>
            <person name="Clark G."/>
            <person name="Wilfong A."/>
            <person name="Northrup H."/>
            <person name="Adesina A."/>
            <person name="Bacino C.A."/>
            <person name="Scaglia F."/>
            <person name="Bonnen P.E."/>
            <person name="Crosson J."/>
            <person name="Duis J."/>
            <person name="Maegawa G.H."/>
            <person name="Coman D."/>
            <person name="Inwood A."/>
            <person name="McGill J."/>
            <person name="Boerwinkle E."/>
            <person name="Graham B."/>
            <person name="Beaudet A."/>
            <person name="Eng C.M."/>
            <person name="Hanchard N.A."/>
            <person name="Xia F."/>
            <person name="Orange J.S."/>
            <person name="Gibbs R.A."/>
            <person name="Lupski J.R."/>
            <person name="Yang Y."/>
        </authorList>
    </citation>
    <scope>INVOLVEMENT IN MECRCN</scope>
    <scope>VARIANT MECRCN ARG-154</scope>
    <scope>SUBCELLULAR LOCATION</scope>
</reference>
<reference key="10">
    <citation type="journal article" date="2016" name="Am. J. Hum. Genet.">
        <title>Bi-allelic truncating mutations in TANGO2 cause infancy-onset recurrent metabolic crises with encephalocardiomyopathy.</title>
        <authorList>
            <person name="Kremer L.S."/>
            <person name="Distelmaier F."/>
            <person name="Alhaddad B."/>
            <person name="Hempel M."/>
            <person name="Iuso A."/>
            <person name="Kuepper C."/>
            <person name="Muehlhausen C."/>
            <person name="Kovacs-Nagy R."/>
            <person name="Satanovskij R."/>
            <person name="Graf E."/>
            <person name="Berutti R."/>
            <person name="Eckstein G."/>
            <person name="Durbin R."/>
            <person name="Sauer S."/>
            <person name="Hoffmann G.F."/>
            <person name="Strom T.M."/>
            <person name="Santer R."/>
            <person name="Meitinger T."/>
            <person name="Klopstock T."/>
            <person name="Prokisch H."/>
            <person name="Haack T.B."/>
        </authorList>
    </citation>
    <scope>VARIANT MECRCN 140-ARG--SER-256 DEL</scope>
</reference>
<reference key="11">
    <citation type="journal article" date="2019" name="Genet. Med.">
        <title>TANGO2: expanding the clinical phenotype and spectrum of pathogenic variants.</title>
        <authorList>
            <person name="Dines J.N."/>
            <person name="Golden-Grant K."/>
            <person name="LaCroix A."/>
            <person name="Muir A.M."/>
            <person name="Cintron D.L."/>
            <person name="McWalter K."/>
            <person name="Cho M.T."/>
            <person name="Sun A."/>
            <person name="Merritt J.L."/>
            <person name="Thies J."/>
            <person name="Niyazov D."/>
            <person name="Burton B."/>
            <person name="Kim K."/>
            <person name="Fleming L."/>
            <person name="Westman R."/>
            <person name="Karachunski P."/>
            <person name="Dalton J."/>
            <person name="Basinger A."/>
            <person name="Ficicioglu C."/>
            <person name="Helbig I."/>
            <person name="Pendziwiat M."/>
            <person name="Muhle H."/>
            <person name="Helbig K.L."/>
            <person name="Caliebe A."/>
            <person name="Santer R."/>
            <person name="Becker K."/>
            <person name="Suchy S."/>
            <person name="Douglas G."/>
            <person name="Millan F."/>
            <person name="Begtrup A."/>
            <person name="Monaghan K.G."/>
            <person name="Mefford H.C."/>
        </authorList>
    </citation>
    <scope>VARIANTS MECRCN LYS-26; 32-ARG--SER-276 DEL AND CYS-89</scope>
</reference>
<reference key="12">
    <citation type="journal article" date="2019" name="Genet. Med.">
        <authorList>
            <person name="Dines J.N."/>
            <person name="Golden-Grant K."/>
            <person name="LaCroix A."/>
            <person name="Muir A.M."/>
            <person name="Cintron D.L."/>
            <person name="McWalter K."/>
            <person name="Cho M.T."/>
            <person name="Sun A."/>
            <person name="Merritt J.L."/>
            <person name="Thies J."/>
            <person name="Niyazov D."/>
            <person name="Burton B."/>
            <person name="Kim K."/>
            <person name="Fleming L."/>
            <person name="Westman R."/>
            <person name="Karachunski P."/>
            <person name="Dalton J."/>
            <person name="Basinger A."/>
            <person name="Ficicioglu C."/>
            <person name="Helbig I."/>
            <person name="Pendziwiat M."/>
            <person name="Muhle H."/>
            <person name="Helbig K.L."/>
            <person name="Caliebe A."/>
            <person name="Santer R."/>
            <person name="Becker K."/>
            <person name="Suchy S."/>
            <person name="Douglas G."/>
            <person name="Millan F."/>
            <person name="Begtrup A."/>
            <person name="Monaghan K.G."/>
            <person name="Mefford H.C."/>
        </authorList>
    </citation>
    <scope>ERRATUM OF PUBMED:30245509</scope>
</reference>
<reference key="13">
    <citation type="journal article" date="2019" name="J. Inherit. Metab. Dis.">
        <title>TANGO2 deficiency as a cause of neurodevelopmental delay with indirect effects on mitochondrial energy metabolism.</title>
        <authorList>
            <person name="Jennions E."/>
            <person name="Hedberg-Oldfors C."/>
            <person name="Berglund A.K."/>
            <person name="Kollberg G."/>
            <person name="Toernhage C.J."/>
            <person name="Eklund E.A."/>
            <person name="Oldfors A."/>
            <person name="Verloo P."/>
            <person name="Vanlander A.V."/>
            <person name="De Meirleir L."/>
            <person name="Seneca S."/>
            <person name="Sterky F.H."/>
            <person name="Darin N."/>
        </authorList>
    </citation>
    <scope>VARIANTS MECRCN ARG-20 AND 88-ARG--SER-276 DEL</scope>
    <scope>SUBCELLULAR LOCATION</scope>
</reference>
<reference key="14">
    <citation type="journal article" date="2020" name="J. Inherit. Metab. Dis.">
        <title>Clinical presentation and proteomic signature of patients with TANGO2 mutations.</title>
        <authorList>
            <person name="Mingirulli N."/>
            <person name="Pyle A."/>
            <person name="Hathazi D."/>
            <person name="Alston C.L."/>
            <person name="Kohlschmidt N."/>
            <person name="O'Grady G."/>
            <person name="Waddell L."/>
            <person name="Evesson F."/>
            <person name="Cooper S.B.T."/>
            <person name="Turner C."/>
            <person name="Duff J."/>
            <person name="Topf A."/>
            <person name="Yubero D."/>
            <person name="Jou C."/>
            <person name="Nascimento A."/>
            <person name="Ortez C."/>
            <person name="Garcia-Cazorla A."/>
            <person name="Gross C."/>
            <person name="O'Callaghan M."/>
            <person name="Santra S."/>
            <person name="Preece M.A."/>
            <person name="Champion M."/>
            <person name="Korenev S."/>
            <person name="Chronopoulou E."/>
            <person name="Anirban M."/>
            <person name="Pierre G."/>
            <person name="McArthur D."/>
            <person name="Thompson K."/>
            <person name="Navas P."/>
            <person name="Ribes A."/>
            <person name="Tort F."/>
            <person name="Schlueter A."/>
            <person name="Pujol A."/>
            <person name="Montero R."/>
            <person name="Sarquella G."/>
            <person name="Lochmueller H."/>
            <person name="Jimenez-Mallebrera C."/>
            <person name="Taylor R.W."/>
            <person name="Artuch R."/>
            <person name="Kirschner J."/>
            <person name="Gruenert S.C."/>
            <person name="Roos A."/>
            <person name="Horvath R."/>
        </authorList>
    </citation>
    <scope>VARIANTS MECRCN PHE-5 DEL; PHE-6 DEL; PRO-74 AND 88-ARG--SER-276 DEL</scope>
</reference>
<reference key="15">
    <citation type="journal article" date="2021" name="Arch. Pediatr.">
        <title>Clinical phenotype associated with TANGO2 gene mutation.</title>
        <authorList>
            <person name="Hoebeke C."/>
            <person name="Cano A."/>
            <person name="De Lonlay P."/>
            <person name="Chabrol B."/>
        </authorList>
    </citation>
    <scope>VARIANT MECRCN 233-GLY--SER-276 DEL</scope>
</reference>
<reference key="16">
    <citation type="journal article" date="2021" name="J. Inherit. Metab. Dis.">
        <title>Clinical and biological characterization of 20 patients with TANGO2 deficiency indicates novel triggers of metabolic crises and no primary energetic defect.</title>
        <authorList>
            <person name="Berat C.M."/>
            <person name="Montealegre S."/>
            <person name="Wiedemann A."/>
            <person name="Nuzum M.L.C."/>
            <person name="Blondel A."/>
            <person name="Debruge H."/>
            <person name="Cano A."/>
            <person name="Chabrol B."/>
            <person name="Hoebeke C."/>
            <person name="Polak M."/>
            <person name="Stoupa A."/>
            <person name="Feillet F."/>
            <person name="Torre S."/>
            <person name="Boddaert N."/>
            <person name="Bruel H."/>
            <person name="Barth M."/>
            <person name="Damaj L."/>
            <person name="Abi-Warde M.T."/>
            <person name="Afenjar A."/>
            <person name="Benoist J.F."/>
            <person name="Madrange M."/>
            <person name="Caccavelli L."/>
            <person name="Renard P."/>
            <person name="Hubas A."/>
            <person name="Nusbaum P."/>
            <person name="Pontoizeau C."/>
            <person name="Gobin S."/>
            <person name="van Endert P."/>
            <person name="Ottolenghi C."/>
            <person name="Maltret A."/>
            <person name="de Lonlay P."/>
        </authorList>
    </citation>
    <scope>VARIANTS MECRCN PRO-20; 32-ARG--SER-276 DEL; 86-ARG--SER-276 DEL; 88-ARG--SER-276 DEL; 182-GLN--SER-276 DEL AND ILE-236</scope>
</reference>
<reference key="17">
    <citation type="journal article" date="2021" name="J. Inherit. Metab. Dis.">
        <title>The phenotype associated with variants in TANGO2 may be explained by a dual role of the protein in ER-to-Golgi transport and at the mitochondria.</title>
        <authorList>
            <person name="Milev M.P."/>
            <person name="Saint-Dic D."/>
            <person name="Zardoui K."/>
            <person name="Klopstock T."/>
            <person name="Law C."/>
            <person name="Distelmaier F."/>
            <person name="Sacher M."/>
        </authorList>
    </citation>
    <scope>CHARACTERIZATION OF VARIANT MECRCN 140-ARG--SER-256 DEL</scope>
    <scope>SUBCELLULAR LOCATION</scope>
    <scope>MUTAGENESIS OF 1-MET--TRP-40</scope>
</reference>
<evidence type="ECO:0000269" key="1">
    <source>
    </source>
</evidence>
<evidence type="ECO:0000269" key="2">
    <source>
    </source>
</evidence>
<evidence type="ECO:0000269" key="3">
    <source>
    </source>
</evidence>
<evidence type="ECO:0000269" key="4">
    <source>
    </source>
</evidence>
<evidence type="ECO:0000269" key="5">
    <source>
    </source>
</evidence>
<evidence type="ECO:0000269" key="6">
    <source>
    </source>
</evidence>
<evidence type="ECO:0000269" key="7">
    <source>
    </source>
</evidence>
<evidence type="ECO:0000269" key="8">
    <source>
    </source>
</evidence>
<evidence type="ECO:0000269" key="9">
    <source>
    </source>
</evidence>
<evidence type="ECO:0000269" key="10">
    <source>
    </source>
</evidence>
<evidence type="ECO:0000269" key="11">
    <source>
    </source>
</evidence>
<evidence type="ECO:0000303" key="12">
    <source>
    </source>
</evidence>
<evidence type="ECO:0000305" key="13"/>
<keyword id="KW-0002">3D-structure</keyword>
<keyword id="KW-0025">Alternative splicing</keyword>
<keyword id="KW-0963">Cytoplasm</keyword>
<keyword id="KW-0225">Disease variant</keyword>
<keyword id="KW-0333">Golgi apparatus</keyword>
<keyword id="KW-0496">Mitochondrion</keyword>
<keyword id="KW-0523">Neurodegeneration</keyword>
<keyword id="KW-1267">Proteomics identification</keyword>
<keyword id="KW-1185">Reference proteome</keyword>
<comment type="function">
    <text evidence="11">May be involved in lipid homeostasis.</text>
</comment>
<comment type="interaction">
    <interactant intactId="EBI-21014572">
        <id>Q6ICL3</id>
    </interactant>
    <interactant intactId="EBI-77938">
        <id>Q99962</id>
        <label>SH3GL2</label>
    </interactant>
    <organismsDiffer>false</organismsDiffer>
    <experiments>2</experiments>
</comment>
<comment type="subcellular location">
    <subcellularLocation>
        <location evidence="5 7 11">Cytoplasm</location>
    </subcellularLocation>
    <subcellularLocation>
        <location evidence="7 10 11">Mitochondrion</location>
    </subcellularLocation>
    <subcellularLocation>
        <location evidence="2">Golgi apparatus</location>
    </subcellularLocation>
    <text evidence="11">Localizes predominantly to mitochondrion. Deteted in close proximity to endoplasmic reticulum and lipid droplets.</text>
</comment>
<comment type="alternative products">
    <event type="alternative splicing"/>
    <isoform>
        <id>Q6ICL3-1</id>
        <name>1</name>
        <sequence type="displayed"/>
    </isoform>
    <isoform>
        <id>Q6ICL3-2</id>
        <name>2</name>
        <sequence type="described" ref="VSP_021139"/>
    </isoform>
    <isoform>
        <id>Q6ICL3-3</id>
        <name>3</name>
        <sequence type="described" ref="VSP_021137 VSP_021138"/>
    </isoform>
    <isoform>
        <id>Q6ICL3-4</id>
        <name>4</name>
        <sequence type="described" ref="VSP_055605"/>
    </isoform>
    <isoform>
        <id>Q6ICL3-5</id>
        <name>5</name>
        <sequence type="described" ref="VSP_055604"/>
    </isoform>
    <isoform>
        <id>Q6ICL3-6</id>
        <name>6</name>
        <sequence type="described" ref="VSP_055605 VSP_055606 VSP_055607"/>
    </isoform>
</comment>
<comment type="disease" evidence="2 3 4 5 6 7 8 9">
    <disease id="DI-04674">
        <name>Metabolic crises, recurrent, with rhabdomyolysis, cardiac arrhythmias, and neurodegeneration</name>
        <acronym>MECRCN</acronym>
        <description>An autosomal recessive disorder characterized by metabolic encephalomyopathic crises, hypoglycemia, hyperammonemia, episodic rhabdomyolysis, susceptibility to life-threatening cardiac tachyarrhythmias, developmental delay, intellectual disability, and mild diffuse cerebral atrophy.</description>
        <dbReference type="MIM" id="616878"/>
    </disease>
    <text>The disease is caused by variants affecting the gene represented in this entry.</text>
</comment>
<comment type="similarity">
    <text evidence="13">Belongs to the Tango2 family.</text>
</comment>
<comment type="caution">
    <text evidence="2 5 7 10 11">Previous published data showed conflicting results on the intracellular location of TANGO2. Has been reported to be located in the Golgi apparatus (PubMed:26805781). However, another study was unable to detect Golgi localization (PubMed:32909282). Has been reported to be located in the mitochondrion by several recent studies (PubMed:32909282, PubMed:35197517, PubMed:36961129). However, no mitochondrial localization was detected in a study which reported that the protein is primarily cytoplasmic (PubMed:31276219).</text>
</comment>
<organism>
    <name type="scientific">Homo sapiens</name>
    <name type="common">Human</name>
    <dbReference type="NCBI Taxonomy" id="9606"/>
    <lineage>
        <taxon>Eukaryota</taxon>
        <taxon>Metazoa</taxon>
        <taxon>Chordata</taxon>
        <taxon>Craniata</taxon>
        <taxon>Vertebrata</taxon>
        <taxon>Euteleostomi</taxon>
        <taxon>Mammalia</taxon>
        <taxon>Eutheria</taxon>
        <taxon>Euarchontoglires</taxon>
        <taxon>Primates</taxon>
        <taxon>Haplorrhini</taxon>
        <taxon>Catarrhini</taxon>
        <taxon>Hominidae</taxon>
        <taxon>Homo</taxon>
    </lineage>
</organism>
<gene>
    <name type="primary">TANGO2</name>
    <name type="synonym">C22orf25</name>
</gene>
<accession>Q6ICL3</accession>
<accession>A8MUE9</accession>
<accession>B7WNV6</accession>
<accession>B7Z583</accession>
<accession>B7Z730</accession>
<accession>D3DX23</accession>
<accession>Q8IW05</accession>
<accession>Q8NAL0</accession>
<accession>Q8TCS0</accession>
<accession>Q96M16</accession>
<proteinExistence type="evidence at protein level"/>
<feature type="chain" id="PRO_0000253891" description="Transport and Golgi organization protein 2 homolog">
    <location>
        <begin position="1"/>
        <end position="276"/>
    </location>
</feature>
<feature type="splice variant" id="VSP_055604" description="In isoform 5." evidence="12">
    <original>MCIIFFKFDPRPVSKNAYRLILAANRDEFYSRPSKLADFWGNNNEILSGLDMEEGKEGGTWLGISTRGKLAALTNYLQPQLDWQARGRGELVTHFLTTDVDSLSYLKKVSMEGHLYNGFNLIAADL</original>
    <variation>MAGHQHTWQAGSTHQLPAAAAGLAGPRA</variation>
    <location>
        <begin position="1"/>
        <end position="126"/>
    </location>
</feature>
<feature type="splice variant" id="VSP_021137" description="In isoform 3." evidence="12">
    <original>MCIIFFKFDPRPVSKNAYRLILAANRDEFYSRPSKLADFWGNNNEILS</original>
    <variation>MPLGAGTPVNVQRREDSATEGSHRLILAANRDEFYSRPSKLADFWGNNNEILS</variation>
    <location>
        <begin position="1"/>
        <end position="48"/>
    </location>
</feature>
<feature type="splice variant" id="VSP_055605" description="In isoform 4 and isoform 6." evidence="12">
    <original>MCIIFFKFDPRPVSKNAY</original>
    <variation>MPPKLLCAGRCVGQDGAAQAWHCPPGQGHSVWDAVRMPLGAGTPVNVQRREDSATEGSH</variation>
    <location>
        <begin position="1"/>
        <end position="18"/>
    </location>
</feature>
<feature type="splice variant" id="VSP_021139" description="In isoform 2." evidence="12">
    <location>
        <begin position="90"/>
        <end position="151"/>
    </location>
</feature>
<feature type="splice variant" id="VSP_055606" description="In isoform 6." evidence="12">
    <original>GTYGLSN</original>
    <variation>EPTLSSW</variation>
    <location>
        <begin position="151"/>
        <end position="157"/>
    </location>
</feature>
<feature type="splice variant" id="VSP_055607" description="In isoform 6." evidence="12">
    <location>
        <begin position="158"/>
        <end position="276"/>
    </location>
</feature>
<feature type="splice variant" id="VSP_021138" description="In isoform 3." evidence="12">
    <location>
        <begin position="190"/>
        <end position="197"/>
    </location>
</feature>
<feature type="sequence variant" id="VAR_085626" description="In MECRCN; uncertain significance." evidence="6">
    <location>
        <position position="5"/>
    </location>
</feature>
<feature type="sequence variant" id="VAR_085627" description="In MECRCN; uncertain significance." evidence="6">
    <location>
        <position position="6"/>
    </location>
</feature>
<feature type="sequence variant" id="VAR_085628" description="In MECRCN." evidence="8">
    <original>L</original>
    <variation>P</variation>
    <location>
        <position position="20"/>
    </location>
</feature>
<feature type="sequence variant" id="VAR_085629" description="In MECRCN; dbSNP:rs1191958022." evidence="5">
    <original>L</original>
    <variation>R</variation>
    <location>
        <position position="20"/>
    </location>
</feature>
<feature type="sequence variant" id="VAR_085630" description="In MECRCN; uncertain significance; dbSNP:rs1057520382." evidence="4">
    <original>R</original>
    <variation>K</variation>
    <location>
        <position position="26"/>
    </location>
</feature>
<feature type="sequence variant" id="VAR_085631" description="In MECRCN." evidence="4 8">
    <location>
        <begin position="32"/>
        <end position="276"/>
    </location>
</feature>
<feature type="sequence variant" id="VAR_085632" description="In MECRCN; uncertain significance; dbSNP:rs1235314092." evidence="6">
    <original>T</original>
    <variation>P</variation>
    <location>
        <position position="74"/>
    </location>
</feature>
<feature type="sequence variant" id="VAR_085633" description="In MECRCN." evidence="8">
    <location>
        <begin position="86"/>
        <end position="276"/>
    </location>
</feature>
<feature type="sequence variant" id="VAR_085634" description="In MECRCN." evidence="5 6 7 8">
    <location>
        <begin position="88"/>
        <end position="276"/>
    </location>
</feature>
<feature type="sequence variant" id="VAR_085635" description="In MECRCN; uncertain significance; dbSNP:rs1313698326." evidence="4">
    <original>G</original>
    <variation>C</variation>
    <location>
        <position position="89"/>
    </location>
</feature>
<feature type="sequence variant" id="VAR_028742" description="In dbSNP:rs17855650." evidence="1">
    <original>D</original>
    <variation>N</variation>
    <location>
        <position position="125"/>
    </location>
</feature>
<feature type="sequence variant" id="VAR_085636" description="In MECRCN; delayed ER-to-Golgi transport; altered mitochondrial morphology." evidence="3 7">
    <location>
        <begin position="140"/>
        <end position="256"/>
    </location>
</feature>
<feature type="sequence variant" id="VAR_076912" description="In MECRCN; dbSNP:rs752298579." evidence="2">
    <original>G</original>
    <variation>R</variation>
    <location>
        <position position="154"/>
    </location>
</feature>
<feature type="sequence variant" id="VAR_085637" description="In MECRCN." evidence="8">
    <location>
        <begin position="182"/>
        <end position="276"/>
    </location>
</feature>
<feature type="sequence variant" id="VAR_028743" description="In dbSNP:rs17854107." evidence="1">
    <original>E</original>
    <variation>K</variation>
    <location>
        <position position="200"/>
    </location>
</feature>
<feature type="sequence variant" id="VAR_085638" description="In MECRCN; uncertain significance." evidence="9">
    <location>
        <begin position="233"/>
        <end position="276"/>
    </location>
</feature>
<feature type="sequence variant" id="VAR_085639" description="In MECRCN; uncertain significance; dbSNP:rs2048750927." evidence="8">
    <original>T</original>
    <variation>I</variation>
    <location>
        <position position="236"/>
    </location>
</feature>
<feature type="sequence variant" id="VAR_028744" description="In dbSNP:rs16982614.">
    <original>D</original>
    <variation>E</variation>
    <location>
        <position position="245"/>
    </location>
</feature>
<feature type="mutagenesis site" description="Abolishes mitochondrial localization." evidence="7">
    <location>
        <begin position="1"/>
        <end position="40"/>
    </location>
</feature>
<protein>
    <recommendedName>
        <fullName>Transport and Golgi organization protein 2 homolog</fullName>
    </recommendedName>
</protein>
<sequence length="276" mass="30937">MCIIFFKFDPRPVSKNAYRLILAANRDEFYSRPSKLADFWGNNNEILSGLDMEEGKEGGTWLGISTRGKLAALTNYLQPQLDWQARGRGELVTHFLTTDVDSLSYLKKVSMEGHLYNGFNLIAADLSTAKGDVICYYGNRGEPDPIVLTPGTYGLSNALLETPWRKLCFGKQLFLEAVERSQALPKDVLIASLLDVLNNEEAQLPDPAIEDQGGEYVQPMLSKYAAVCVRCPGYGTRTNTIILVDADGHVTFTERSMMDKDLSHWETRTYEFTLQS</sequence>
<name>TNG2_HUMAN</name>